<dbReference type="EMBL" id="CP001056">
    <property type="protein sequence ID" value="ACD22881.1"/>
    <property type="molecule type" value="Genomic_DNA"/>
</dbReference>
<dbReference type="SMR" id="B2TJ56"/>
<dbReference type="KEGG" id="cbk:CLL_A1274"/>
<dbReference type="PATRIC" id="fig|935198.13.peg.1220"/>
<dbReference type="HOGENOM" id="CLU_089475_6_3_9"/>
<dbReference type="Proteomes" id="UP000001195">
    <property type="component" value="Chromosome"/>
</dbReference>
<dbReference type="GO" id="GO:0005829">
    <property type="term" value="C:cytosol"/>
    <property type="evidence" value="ECO:0007669"/>
    <property type="project" value="TreeGrafter"/>
</dbReference>
<dbReference type="GO" id="GO:0043024">
    <property type="term" value="F:ribosomal small subunit binding"/>
    <property type="evidence" value="ECO:0007669"/>
    <property type="project" value="TreeGrafter"/>
</dbReference>
<dbReference type="GO" id="GO:0030490">
    <property type="term" value="P:maturation of SSU-rRNA"/>
    <property type="evidence" value="ECO:0007669"/>
    <property type="project" value="UniProtKB-UniRule"/>
</dbReference>
<dbReference type="Gene3D" id="3.30.300.20">
    <property type="match status" value="1"/>
</dbReference>
<dbReference type="HAMAP" id="MF_00003">
    <property type="entry name" value="RbfA"/>
    <property type="match status" value="1"/>
</dbReference>
<dbReference type="InterPro" id="IPR015946">
    <property type="entry name" value="KH_dom-like_a/b"/>
</dbReference>
<dbReference type="InterPro" id="IPR000238">
    <property type="entry name" value="RbfA"/>
</dbReference>
<dbReference type="InterPro" id="IPR023799">
    <property type="entry name" value="RbfA_dom_sf"/>
</dbReference>
<dbReference type="NCBIfam" id="TIGR00082">
    <property type="entry name" value="rbfA"/>
    <property type="match status" value="1"/>
</dbReference>
<dbReference type="PANTHER" id="PTHR33515">
    <property type="entry name" value="RIBOSOME-BINDING FACTOR A, CHLOROPLASTIC-RELATED"/>
    <property type="match status" value="1"/>
</dbReference>
<dbReference type="PANTHER" id="PTHR33515:SF1">
    <property type="entry name" value="RIBOSOME-BINDING FACTOR A, CHLOROPLASTIC-RELATED"/>
    <property type="match status" value="1"/>
</dbReference>
<dbReference type="Pfam" id="PF02033">
    <property type="entry name" value="RBFA"/>
    <property type="match status" value="1"/>
</dbReference>
<dbReference type="SUPFAM" id="SSF89919">
    <property type="entry name" value="Ribosome-binding factor A, RbfA"/>
    <property type="match status" value="1"/>
</dbReference>
<sequence>MPNYRGGRINEEFKREISNIIQNEIKDPRLTAMISVTDVKVTKDLKYAKVYVSIFSTKEEEKKDNFTALKSASGFIRKILGQRINVRHNPEILFELDDSINYAMHIDELIQKVKDK</sequence>
<accession>B2TJ56</accession>
<protein>
    <recommendedName>
        <fullName evidence="1">Ribosome-binding factor A</fullName>
    </recommendedName>
</protein>
<evidence type="ECO:0000255" key="1">
    <source>
        <dbReference type="HAMAP-Rule" id="MF_00003"/>
    </source>
</evidence>
<reference key="1">
    <citation type="submission" date="2008-04" db="EMBL/GenBank/DDBJ databases">
        <title>Complete sequence of Clostridium botulinum strain Eklund.</title>
        <authorList>
            <person name="Brinkac L.M."/>
            <person name="Brown J.L."/>
            <person name="Bruce D."/>
            <person name="Detter C."/>
            <person name="Munk C."/>
            <person name="Smith L.A."/>
            <person name="Smith T.J."/>
            <person name="Sutton G."/>
            <person name="Brettin T.S."/>
        </authorList>
    </citation>
    <scope>NUCLEOTIDE SEQUENCE [LARGE SCALE GENOMIC DNA]</scope>
    <source>
        <strain>Eklund 17B / Type B</strain>
    </source>
</reference>
<keyword id="KW-0963">Cytoplasm</keyword>
<keyword id="KW-0690">Ribosome biogenesis</keyword>
<proteinExistence type="inferred from homology"/>
<comment type="function">
    <text evidence="1">One of several proteins that assist in the late maturation steps of the functional core of the 30S ribosomal subunit. Associates with free 30S ribosomal subunits (but not with 30S subunits that are part of 70S ribosomes or polysomes). Required for efficient processing of 16S rRNA. May interact with the 5'-terminal helix region of 16S rRNA.</text>
</comment>
<comment type="subunit">
    <text evidence="1">Monomer. Binds 30S ribosomal subunits, but not 50S ribosomal subunits or 70S ribosomes.</text>
</comment>
<comment type="subcellular location">
    <subcellularLocation>
        <location evidence="1">Cytoplasm</location>
    </subcellularLocation>
</comment>
<comment type="similarity">
    <text evidence="1">Belongs to the RbfA family.</text>
</comment>
<gene>
    <name evidence="1" type="primary">rbfA</name>
    <name type="ordered locus">CLL_A1274</name>
</gene>
<organism>
    <name type="scientific">Clostridium botulinum (strain Eklund 17B / Type B)</name>
    <dbReference type="NCBI Taxonomy" id="935198"/>
    <lineage>
        <taxon>Bacteria</taxon>
        <taxon>Bacillati</taxon>
        <taxon>Bacillota</taxon>
        <taxon>Clostridia</taxon>
        <taxon>Eubacteriales</taxon>
        <taxon>Clostridiaceae</taxon>
        <taxon>Clostridium</taxon>
    </lineage>
</organism>
<name>RBFA_CLOBB</name>
<feature type="chain" id="PRO_1000088875" description="Ribosome-binding factor A">
    <location>
        <begin position="1"/>
        <end position="116"/>
    </location>
</feature>